<proteinExistence type="evidence at protein level"/>
<keyword id="KW-0326">Glycosidase</keyword>
<keyword id="KW-0378">Hydrolase</keyword>
<keyword id="KW-1185">Reference proteome</keyword>
<keyword id="KW-0677">Repeat</keyword>
<reference key="1">
    <citation type="journal article" date="2008" name="J. Bacteriol.">
        <title>Insights into plant cell wall degradation from the genome sequence of the soil bacterium Cellvibrio japonicus.</title>
        <authorList>
            <person name="DeBoy R.T."/>
            <person name="Mongodin E.F."/>
            <person name="Fouts D.E."/>
            <person name="Tailford L.E."/>
            <person name="Khouri H."/>
            <person name="Emerson J.B."/>
            <person name="Mohamoud Y."/>
            <person name="Watkins K."/>
            <person name="Henrissat B."/>
            <person name="Gilbert H.J."/>
            <person name="Nelson K.E."/>
        </authorList>
    </citation>
    <scope>NUCLEOTIDE SEQUENCE [LARGE SCALE GENOMIC DNA]</scope>
    <source>
        <strain>Ueda107</strain>
    </source>
</reference>
<reference key="2">
    <citation type="journal article" date="2009" name="Biochemistry">
        <title>Understanding how diverse beta-mannanases recognize heterogeneous substrates.</title>
        <authorList>
            <person name="Tailford L.E."/>
            <person name="Ducros V.M."/>
            <person name="Flint J.E."/>
            <person name="Roberts S.M."/>
            <person name="Morland C."/>
            <person name="Zechel D.L."/>
            <person name="Smith N."/>
            <person name="Bjornvad M.E."/>
            <person name="Borchert T.V."/>
            <person name="Wilson K.S."/>
            <person name="Davies G.J."/>
            <person name="Gilbert H.J."/>
        </authorList>
    </citation>
    <scope>FUNCTION</scope>
    <scope>CATALYTIC ACTIVITY</scope>
    <scope>BIOPHYSICOCHEMICAL PROPERTIES</scope>
    <scope>SUBSTRATE SPECIFICITY</scope>
</reference>
<sequence length="430" mass="46325">MSLFTPLSETNVRSHTNTSSVFCRRIKTLVAGLTALGLMLAAVSASAGFYVSGKQLREGNGNNFIMRGVNLPHAWFPDRTNQALADISATGANSVRVVLSNGRLWSRTPESQVASIISQAKARQLITVLEVHDTTGYGEQTAATLSEAVDYWIAIRNALIGQEDYVIINIGNEPFGNGQSASTWLNLHRDAINRLRNAGFTHTLMVDAANWGQDWENIMRNNASSLFNSDPRRNVIFSVHMYEVYPNDTAVNNYMSAFNSMNLPLVVGEFAANHFGSYVDAGSIMARAQQYGFGYLGWSWSGNSSNLSALDVVTNFNAGSLTTWGNLLINNTNGIRNTSRKATIFGGSGSSSSSAGSCGTAPNGYPYCCNASSATGNGWGWENNRSCVVATTSTSCNWYGTSYPICVNTSSGWGWENNRSCIAASTCAAQ</sequence>
<protein>
    <recommendedName>
        <fullName evidence="4">Mannan endo-1,4-beta-mannosidase</fullName>
        <ecNumber evidence="3">3.2.1.78</ecNumber>
    </recommendedName>
    <alternativeName>
        <fullName evidence="4">Mannanase 5A</fullName>
        <shortName evidence="4">Man5A</shortName>
    </alternativeName>
    <alternativeName>
        <fullName evidence="4">Mannanase A</fullName>
        <shortName evidence="4">ManA</shortName>
    </alternativeName>
</protein>
<organism>
    <name type="scientific">Cellvibrio japonicus (strain Ueda107)</name>
    <name type="common">Pseudomonas fluorescens subsp. cellulosa</name>
    <dbReference type="NCBI Taxonomy" id="498211"/>
    <lineage>
        <taxon>Bacteria</taxon>
        <taxon>Pseudomonadati</taxon>
        <taxon>Pseudomonadota</taxon>
        <taxon>Gammaproteobacteria</taxon>
        <taxon>Cellvibrionales</taxon>
        <taxon>Cellvibrionaceae</taxon>
        <taxon>Cellvibrio</taxon>
    </lineage>
</organism>
<dbReference type="EC" id="3.2.1.78" evidence="3"/>
<dbReference type="EMBL" id="CP000934">
    <property type="protein sequence ID" value="ACE84673.1"/>
    <property type="molecule type" value="Genomic_DNA"/>
</dbReference>
<dbReference type="RefSeq" id="WP_012488914.1">
    <property type="nucleotide sequence ID" value="NC_010995.1"/>
</dbReference>
<dbReference type="SMR" id="B3PF24"/>
<dbReference type="STRING" id="498211.CJA_3338"/>
<dbReference type="CAZy" id="CBM10">
    <property type="family name" value="Carbohydrate-Binding Module Family 10"/>
</dbReference>
<dbReference type="CAZy" id="GH5">
    <property type="family name" value="Glycoside Hydrolase Family 5"/>
</dbReference>
<dbReference type="KEGG" id="cja:CJA_3338"/>
<dbReference type="eggNOG" id="COG2730">
    <property type="taxonomic scope" value="Bacteria"/>
</dbReference>
<dbReference type="HOGENOM" id="CLU_018488_1_1_6"/>
<dbReference type="OrthoDB" id="220114at2"/>
<dbReference type="Proteomes" id="UP000001036">
    <property type="component" value="Chromosome"/>
</dbReference>
<dbReference type="GO" id="GO:0030248">
    <property type="term" value="F:cellulose binding"/>
    <property type="evidence" value="ECO:0007669"/>
    <property type="project" value="InterPro"/>
</dbReference>
<dbReference type="GO" id="GO:0016985">
    <property type="term" value="F:mannan endo-1,4-beta-mannosidase activity"/>
    <property type="evidence" value="ECO:0007669"/>
    <property type="project" value="UniProtKB-EC"/>
</dbReference>
<dbReference type="GO" id="GO:0009251">
    <property type="term" value="P:glucan catabolic process"/>
    <property type="evidence" value="ECO:0007669"/>
    <property type="project" value="TreeGrafter"/>
</dbReference>
<dbReference type="Gene3D" id="2.30.32.30">
    <property type="entry name" value="CBM10"/>
    <property type="match status" value="2"/>
</dbReference>
<dbReference type="Gene3D" id="3.20.20.80">
    <property type="entry name" value="Glycosidases"/>
    <property type="match status" value="1"/>
</dbReference>
<dbReference type="InterPro" id="IPR009031">
    <property type="entry name" value="CBM10"/>
</dbReference>
<dbReference type="InterPro" id="IPR002883">
    <property type="entry name" value="CBM10/Dockerin_dom"/>
</dbReference>
<dbReference type="InterPro" id="IPR036601">
    <property type="entry name" value="CBM10_sf"/>
</dbReference>
<dbReference type="InterPro" id="IPR001547">
    <property type="entry name" value="Glyco_hydro_5"/>
</dbReference>
<dbReference type="InterPro" id="IPR018087">
    <property type="entry name" value="Glyco_hydro_5_CS"/>
</dbReference>
<dbReference type="InterPro" id="IPR017853">
    <property type="entry name" value="Glycoside_hydrolase_SF"/>
</dbReference>
<dbReference type="PANTHER" id="PTHR34142">
    <property type="entry name" value="ENDO-BETA-1,4-GLUCANASE A"/>
    <property type="match status" value="1"/>
</dbReference>
<dbReference type="PANTHER" id="PTHR34142:SF1">
    <property type="entry name" value="GLYCOSIDE HYDROLASE FAMILY 5 DOMAIN-CONTAINING PROTEIN"/>
    <property type="match status" value="1"/>
</dbReference>
<dbReference type="Pfam" id="PF02013">
    <property type="entry name" value="CBM_10"/>
    <property type="match status" value="2"/>
</dbReference>
<dbReference type="Pfam" id="PF00150">
    <property type="entry name" value="Cellulase"/>
    <property type="match status" value="1"/>
</dbReference>
<dbReference type="SMART" id="SM01064">
    <property type="entry name" value="CBM_10"/>
    <property type="match status" value="2"/>
</dbReference>
<dbReference type="SUPFAM" id="SSF51445">
    <property type="entry name" value="(Trans)glycosidases"/>
    <property type="match status" value="1"/>
</dbReference>
<dbReference type="SUPFAM" id="SSF57615">
    <property type="entry name" value="Type X cellulose binding domain, CBDX"/>
    <property type="match status" value="1"/>
</dbReference>
<dbReference type="PROSITE" id="PS51763">
    <property type="entry name" value="CBM10"/>
    <property type="match status" value="2"/>
</dbReference>
<dbReference type="PROSITE" id="PS00659">
    <property type="entry name" value="GLYCOSYL_HYDROL_F5"/>
    <property type="match status" value="1"/>
</dbReference>
<evidence type="ECO:0000250" key="1">
    <source>
        <dbReference type="UniProtKB" id="P22533"/>
    </source>
</evidence>
<evidence type="ECO:0000255" key="2">
    <source>
        <dbReference type="PROSITE-ProRule" id="PRU01099"/>
    </source>
</evidence>
<evidence type="ECO:0000269" key="3">
    <source>
    </source>
</evidence>
<evidence type="ECO:0000303" key="4">
    <source>
    </source>
</evidence>
<evidence type="ECO:0000305" key="5"/>
<comment type="function">
    <text evidence="3">Catalyzes the endo hydrolysis of beta-1,4-linked mannan, galactomannan and glucomannan. It is able to hydrolyze mannosidic linkages that are flanked by mannose or glucose.</text>
</comment>
<comment type="catalytic activity">
    <reaction evidence="3">
        <text>Random hydrolysis of (1-&gt;4)-beta-D-mannosidic linkages in mannans, galactomannans and glucomannans.</text>
        <dbReference type="EC" id="3.2.1.78"/>
    </reaction>
</comment>
<comment type="biophysicochemical properties">
    <kinetics>
        <KM evidence="3">6.2 mg/ml for glucomannan</KM>
        <KM evidence="3">8.5 mg/ml for galactomannan</KM>
        <text evidence="3">kcat is 140000 min(-1) for mannanase activity with galactomannan as substrate. kcat is 62000 min(-1) for mannanase activity with glucomannan as substrate.</text>
    </kinetics>
</comment>
<comment type="similarity">
    <text evidence="5">Belongs to the glycosyl hydrolase 5 (cellulase A) family.</text>
</comment>
<name>MAN5_CELJU</name>
<accession>B3PF24</accession>
<gene>
    <name evidence="4" type="primary">man5A</name>
    <name type="ordered locus">CJA_3338</name>
</gene>
<feature type="chain" id="PRO_0000433975" description="Mannan endo-1,4-beta-mannosidase">
    <location>
        <begin position="1"/>
        <end position="430"/>
    </location>
</feature>
<feature type="domain" description="CBM10 1" evidence="2">
    <location>
        <begin position="357"/>
        <end position="390"/>
    </location>
</feature>
<feature type="domain" description="CBM10 2" evidence="2">
    <location>
        <begin position="395"/>
        <end position="424"/>
    </location>
</feature>
<feature type="active site" description="Proton donor" evidence="1">
    <location>
        <position position="173"/>
    </location>
</feature>
<feature type="active site" description="Nucleophile" evidence="1">
    <location>
        <position position="269"/>
    </location>
</feature>